<organism>
    <name type="scientific">Candida glabrata (strain ATCC 2001 / BCRC 20586 / JCM 3761 / NBRC 0622 / NRRL Y-65 / CBS 138)</name>
    <name type="common">Yeast</name>
    <name type="synonym">Nakaseomyces glabratus</name>
    <dbReference type="NCBI Taxonomy" id="284593"/>
    <lineage>
        <taxon>Eukaryota</taxon>
        <taxon>Fungi</taxon>
        <taxon>Dikarya</taxon>
        <taxon>Ascomycota</taxon>
        <taxon>Saccharomycotina</taxon>
        <taxon>Saccharomycetes</taxon>
        <taxon>Saccharomycetales</taxon>
        <taxon>Saccharomycetaceae</taxon>
        <taxon>Nakaseomyces</taxon>
    </lineage>
</organism>
<feature type="initiator methionine" description="Removed" evidence="1">
    <location>
        <position position="1"/>
    </location>
</feature>
<feature type="chain" id="PRO_0000071932" description="Histone H2B.2">
    <location>
        <begin position="2"/>
        <end position="131"/>
    </location>
</feature>
<feature type="region of interest" description="Disordered" evidence="2">
    <location>
        <begin position="1"/>
        <end position="38"/>
    </location>
</feature>
<feature type="compositionally biased region" description="Basic and acidic residues" evidence="2">
    <location>
        <begin position="1"/>
        <end position="19"/>
    </location>
</feature>
<feature type="modified residue" description="N6-acetyllysine; alternate" evidence="1">
    <location>
        <position position="7"/>
    </location>
</feature>
<feature type="modified residue" description="N6-acetyllysine; alternate" evidence="1">
    <location>
        <position position="8"/>
    </location>
</feature>
<feature type="modified residue" description="Phosphoserine" evidence="1">
    <location>
        <position position="11"/>
    </location>
</feature>
<feature type="modified residue" description="N6-acetyllysine" evidence="1">
    <location>
        <position position="12"/>
    </location>
</feature>
<feature type="modified residue" description="N6-acetyllysine; alternate" evidence="1">
    <location>
        <position position="17"/>
    </location>
</feature>
<feature type="cross-link" description="Glycyl lysine isopeptide (Lys-Gly) (interchain with G-Cter in SUMO); alternate" evidence="1">
    <location>
        <position position="7"/>
    </location>
</feature>
<feature type="cross-link" description="Glycyl lysine isopeptide (Lys-Gly) (interchain with G-Cter in SUMO); alternate" evidence="1">
    <location>
        <position position="8"/>
    </location>
</feature>
<feature type="cross-link" description="Glycyl lysine isopeptide (Lys-Gly) (interchain with G-Cter in SUMO); alternate" evidence="1">
    <location>
        <position position="17"/>
    </location>
</feature>
<feature type="cross-link" description="Glycyl lysine isopeptide (Lys-Gly) (interchain with G-Cter in SUMO)" evidence="1">
    <location>
        <position position="18"/>
    </location>
</feature>
<feature type="cross-link" description="Glycyl lysine isopeptide (Lys-Gly) (interchain with G-Cter in ubiquitin)" evidence="1">
    <location>
        <position position="124"/>
    </location>
</feature>
<evidence type="ECO:0000250" key="1"/>
<evidence type="ECO:0000256" key="2">
    <source>
        <dbReference type="SAM" id="MobiDB-lite"/>
    </source>
</evidence>
<evidence type="ECO:0000305" key="3"/>
<gene>
    <name type="primary">HTB2</name>
    <name type="ordered locus">CAGL0K11462g</name>
</gene>
<accession>Q6FM30</accession>
<proteinExistence type="inferred from homology"/>
<keyword id="KW-0007">Acetylation</keyword>
<keyword id="KW-0158">Chromosome</keyword>
<keyword id="KW-0238">DNA-binding</keyword>
<keyword id="KW-1017">Isopeptide bond</keyword>
<keyword id="KW-0544">Nucleosome core</keyword>
<keyword id="KW-0539">Nucleus</keyword>
<keyword id="KW-0597">Phosphoprotein</keyword>
<keyword id="KW-1185">Reference proteome</keyword>
<keyword id="KW-0832">Ubl conjugation</keyword>
<comment type="function">
    <text>Core component of nucleosome. Nucleosomes wrap and compact DNA into chromatin, limiting DNA accessibility to the cellular machineries which require DNA as a template. Histones thereby play a central role in transcription regulation, DNA repair, DNA replication and chromosomal stability. DNA accessibility is regulated via a complex set of post-translational modifications of histones, also called histone code, and nucleosome remodeling.</text>
</comment>
<comment type="subunit">
    <text>The nucleosome is a histone octamer containing two molecules each of H2A, H2B, H3 and H4 assembled in one H3-H4 heterotetramer and two H2A-H2B heterodimers. The octamer wraps approximately 147 bp of DNA.</text>
</comment>
<comment type="subcellular location">
    <subcellularLocation>
        <location evidence="1">Nucleus</location>
    </subcellularLocation>
    <subcellularLocation>
        <location evidence="1">Chromosome</location>
    </subcellularLocation>
</comment>
<comment type="PTM">
    <text evidence="1">Monoubiquitinated by the UBC2-BRE1 complex to form H2BK123ub1. H2BK123ub1 gives a specific tag for epigenetic transcriptional activation and is also prerequisite for H3K4me and H3K79me formation. H2BK123ub1 also modulates the formation of double-strand breaks during meiosis and is a prerequisite for DNA-damage checkpoint activation (By similarity).</text>
</comment>
<comment type="PTM">
    <text evidence="1">Phosphorylated by STE20 to form H2BS10ph during progression through meiotic prophase. May be correlated with chromosome condensation (By similarity).</text>
</comment>
<comment type="PTM">
    <text evidence="1">Acetylated by GCN5 to form H2BK11ac and H2BK16ac. H2BK16ac can also be formed by ESA1. Acetylation of N-terminal lysines and particularly formation of H2BK11acK16ac has a positive effect on transcription (By similarity).</text>
</comment>
<comment type="PTM">
    <text evidence="1">Sumoylation to form H2BK6su or H2BK7su, and probably also H2BK16su or H2BK17su, occurs preferentially near the telomeres and represses gene transcription.</text>
</comment>
<comment type="similarity">
    <text evidence="3">Belongs to the histone H2B family.</text>
</comment>
<comment type="caution">
    <text evidence="3">To ensure consistency between histone entries, we follow the 'Brno' nomenclature for histone modifications, with positions referring to those used in the literature for the 'closest' model organism. Due to slight variations in histone sequences between organisms and to the presence of initiator methionine in UniProtKB/Swiss-Prot sequences, the actual positions of modified amino acids in the sequence generally differ. In this entry the following conventions are used: H2BK6ac = acetylated Lys-7; H2BK6su = sumoylated Lys-7; H2BK7ac = acetylated Lys-8; H2BK7su = sumoylated Lys-8; H2BS10ph = phosphorylated Ser-11; H2BK11ac = acetylated Lys-12; H2BK16ac = acetylated Lys-17; H2BK16su = sumoylated Lys-17; H2BK17su = sumoylated Lys-18; H2BK123ub1 = monoubiquitinated Lys-124.</text>
</comment>
<protein>
    <recommendedName>
        <fullName>Histone H2B.2</fullName>
    </recommendedName>
</protein>
<reference key="1">
    <citation type="journal article" date="2004" name="Nature">
        <title>Genome evolution in yeasts.</title>
        <authorList>
            <person name="Dujon B."/>
            <person name="Sherman D."/>
            <person name="Fischer G."/>
            <person name="Durrens P."/>
            <person name="Casaregola S."/>
            <person name="Lafontaine I."/>
            <person name="de Montigny J."/>
            <person name="Marck C."/>
            <person name="Neuveglise C."/>
            <person name="Talla E."/>
            <person name="Goffard N."/>
            <person name="Frangeul L."/>
            <person name="Aigle M."/>
            <person name="Anthouard V."/>
            <person name="Babour A."/>
            <person name="Barbe V."/>
            <person name="Barnay S."/>
            <person name="Blanchin S."/>
            <person name="Beckerich J.-M."/>
            <person name="Beyne E."/>
            <person name="Bleykasten C."/>
            <person name="Boisrame A."/>
            <person name="Boyer J."/>
            <person name="Cattolico L."/>
            <person name="Confanioleri F."/>
            <person name="de Daruvar A."/>
            <person name="Despons L."/>
            <person name="Fabre E."/>
            <person name="Fairhead C."/>
            <person name="Ferry-Dumazet H."/>
            <person name="Groppi A."/>
            <person name="Hantraye F."/>
            <person name="Hennequin C."/>
            <person name="Jauniaux N."/>
            <person name="Joyet P."/>
            <person name="Kachouri R."/>
            <person name="Kerrest A."/>
            <person name="Koszul R."/>
            <person name="Lemaire M."/>
            <person name="Lesur I."/>
            <person name="Ma L."/>
            <person name="Muller H."/>
            <person name="Nicaud J.-M."/>
            <person name="Nikolski M."/>
            <person name="Oztas S."/>
            <person name="Ozier-Kalogeropoulos O."/>
            <person name="Pellenz S."/>
            <person name="Potier S."/>
            <person name="Richard G.-F."/>
            <person name="Straub M.-L."/>
            <person name="Suleau A."/>
            <person name="Swennen D."/>
            <person name="Tekaia F."/>
            <person name="Wesolowski-Louvel M."/>
            <person name="Westhof E."/>
            <person name="Wirth B."/>
            <person name="Zeniou-Meyer M."/>
            <person name="Zivanovic Y."/>
            <person name="Bolotin-Fukuhara M."/>
            <person name="Thierry A."/>
            <person name="Bouchier C."/>
            <person name="Caudron B."/>
            <person name="Scarpelli C."/>
            <person name="Gaillardin C."/>
            <person name="Weissenbach J."/>
            <person name="Wincker P."/>
            <person name="Souciet J.-L."/>
        </authorList>
    </citation>
    <scope>NUCLEOTIDE SEQUENCE [LARGE SCALE GENOMIC DNA]</scope>
    <source>
        <strain>ATCC 2001 / BCRC 20586 / JCM 3761 / NBRC 0622 / NRRL Y-65 / CBS 138</strain>
    </source>
</reference>
<name>H2B2_CANGA</name>
<sequence length="131" mass="14218">MSAKAEKKPASKAPAEKKPAAKKTAPSSDGKKRTKARKETYSSYIYKVLKQTHPDTGISQKSMSILNSFVNDIFERIASEASKLAAYNKKSTISAREIQTAVRLILPGELAKHAVSEGTRAVTKYSSSTQA</sequence>
<dbReference type="EMBL" id="CR380957">
    <property type="protein sequence ID" value="CAG61677.1"/>
    <property type="molecule type" value="Genomic_DNA"/>
</dbReference>
<dbReference type="RefSeq" id="XP_448714.1">
    <property type="nucleotide sequence ID" value="XM_448714.1"/>
</dbReference>
<dbReference type="SMR" id="Q6FM30"/>
<dbReference type="FunCoup" id="Q6FM30">
    <property type="interactions" value="1314"/>
</dbReference>
<dbReference type="STRING" id="284593.Q6FM30"/>
<dbReference type="EnsemblFungi" id="CAGL0K11462g-T">
    <property type="protein sequence ID" value="CAGL0K11462g-T-p1"/>
    <property type="gene ID" value="CAGL0K11462g"/>
</dbReference>
<dbReference type="KEGG" id="cgr:2890073"/>
<dbReference type="CGD" id="CAL0134087">
    <property type="gene designation" value="CAGL0K11462g"/>
</dbReference>
<dbReference type="VEuPathDB" id="FungiDB:B1J91_K11462g"/>
<dbReference type="VEuPathDB" id="FungiDB:CAGL0K11462g"/>
<dbReference type="eggNOG" id="KOG1744">
    <property type="taxonomic scope" value="Eukaryota"/>
</dbReference>
<dbReference type="HOGENOM" id="CLU_075666_1_3_1"/>
<dbReference type="InParanoid" id="Q6FM30"/>
<dbReference type="OMA" id="FCPFAIR"/>
<dbReference type="Proteomes" id="UP000002428">
    <property type="component" value="Chromosome K"/>
</dbReference>
<dbReference type="GO" id="GO:0000786">
    <property type="term" value="C:nucleosome"/>
    <property type="evidence" value="ECO:0007669"/>
    <property type="project" value="UniProtKB-KW"/>
</dbReference>
<dbReference type="GO" id="GO:0005634">
    <property type="term" value="C:nucleus"/>
    <property type="evidence" value="ECO:0007669"/>
    <property type="project" value="UniProtKB-SubCell"/>
</dbReference>
<dbReference type="GO" id="GO:0003677">
    <property type="term" value="F:DNA binding"/>
    <property type="evidence" value="ECO:0007669"/>
    <property type="project" value="UniProtKB-KW"/>
</dbReference>
<dbReference type="GO" id="GO:0046982">
    <property type="term" value="F:protein heterodimerization activity"/>
    <property type="evidence" value="ECO:0007669"/>
    <property type="project" value="InterPro"/>
</dbReference>
<dbReference type="GO" id="GO:0030527">
    <property type="term" value="F:structural constituent of chromatin"/>
    <property type="evidence" value="ECO:0007669"/>
    <property type="project" value="InterPro"/>
</dbReference>
<dbReference type="CDD" id="cd22910">
    <property type="entry name" value="HFD_H2B"/>
    <property type="match status" value="1"/>
</dbReference>
<dbReference type="FunFam" id="1.10.20.10:FF:000014">
    <property type="entry name" value="Histone H2B"/>
    <property type="match status" value="1"/>
</dbReference>
<dbReference type="Gene3D" id="1.10.20.10">
    <property type="entry name" value="Histone, subunit A"/>
    <property type="match status" value="1"/>
</dbReference>
<dbReference type="InterPro" id="IPR009072">
    <property type="entry name" value="Histone-fold"/>
</dbReference>
<dbReference type="InterPro" id="IPR007125">
    <property type="entry name" value="Histone_H2A/H2B/H3"/>
</dbReference>
<dbReference type="InterPro" id="IPR000558">
    <property type="entry name" value="Histone_H2B"/>
</dbReference>
<dbReference type="InterPro" id="IPR055333">
    <property type="entry name" value="HISTONE_H2B_site"/>
</dbReference>
<dbReference type="PANTHER" id="PTHR23428">
    <property type="entry name" value="HISTONE H2B"/>
    <property type="match status" value="1"/>
</dbReference>
<dbReference type="Pfam" id="PF00125">
    <property type="entry name" value="Histone"/>
    <property type="match status" value="1"/>
</dbReference>
<dbReference type="PRINTS" id="PR00621">
    <property type="entry name" value="HISTONEH2B"/>
</dbReference>
<dbReference type="SMART" id="SM00427">
    <property type="entry name" value="H2B"/>
    <property type="match status" value="1"/>
</dbReference>
<dbReference type="SUPFAM" id="SSF47113">
    <property type="entry name" value="Histone-fold"/>
    <property type="match status" value="1"/>
</dbReference>
<dbReference type="PROSITE" id="PS00357">
    <property type="entry name" value="HISTONE_H2B"/>
    <property type="match status" value="1"/>
</dbReference>